<gene>
    <name type="primary">MT-CYB</name>
    <name type="synonym">COB</name>
    <name type="synonym">CYTB</name>
    <name type="synonym">MTCYB</name>
</gene>
<dbReference type="EMBL" id="AB046327">
    <property type="protein sequence ID" value="BAB67839.1"/>
    <property type="molecule type" value="Genomic_DNA"/>
</dbReference>
<dbReference type="EMBL" id="AB046328">
    <property type="protein sequence ID" value="BAB67840.1"/>
    <property type="molecule type" value="Genomic_DNA"/>
</dbReference>
<dbReference type="EMBL" id="AB046329">
    <property type="protein sequence ID" value="BAB67841.1"/>
    <property type="molecule type" value="Genomic_DNA"/>
</dbReference>
<dbReference type="SMR" id="Q94NF7"/>
<dbReference type="GO" id="GO:0005743">
    <property type="term" value="C:mitochondrial inner membrane"/>
    <property type="evidence" value="ECO:0007669"/>
    <property type="project" value="UniProtKB-SubCell"/>
</dbReference>
<dbReference type="GO" id="GO:0045275">
    <property type="term" value="C:respiratory chain complex III"/>
    <property type="evidence" value="ECO:0007669"/>
    <property type="project" value="InterPro"/>
</dbReference>
<dbReference type="GO" id="GO:0046872">
    <property type="term" value="F:metal ion binding"/>
    <property type="evidence" value="ECO:0007669"/>
    <property type="project" value="UniProtKB-KW"/>
</dbReference>
<dbReference type="GO" id="GO:0008121">
    <property type="term" value="F:ubiquinol-cytochrome-c reductase activity"/>
    <property type="evidence" value="ECO:0007669"/>
    <property type="project" value="InterPro"/>
</dbReference>
<dbReference type="GO" id="GO:0006122">
    <property type="term" value="P:mitochondrial electron transport, ubiquinol to cytochrome c"/>
    <property type="evidence" value="ECO:0007669"/>
    <property type="project" value="TreeGrafter"/>
</dbReference>
<dbReference type="CDD" id="cd00290">
    <property type="entry name" value="cytochrome_b_C"/>
    <property type="match status" value="1"/>
</dbReference>
<dbReference type="CDD" id="cd00284">
    <property type="entry name" value="Cytochrome_b_N"/>
    <property type="match status" value="1"/>
</dbReference>
<dbReference type="FunFam" id="1.20.810.10:FF:000002">
    <property type="entry name" value="Cytochrome b"/>
    <property type="match status" value="1"/>
</dbReference>
<dbReference type="Gene3D" id="1.20.810.10">
    <property type="entry name" value="Cytochrome Bc1 Complex, Chain C"/>
    <property type="match status" value="1"/>
</dbReference>
<dbReference type="InterPro" id="IPR005798">
    <property type="entry name" value="Cyt_b/b6_C"/>
</dbReference>
<dbReference type="InterPro" id="IPR036150">
    <property type="entry name" value="Cyt_b/b6_C_sf"/>
</dbReference>
<dbReference type="InterPro" id="IPR005797">
    <property type="entry name" value="Cyt_b/b6_N"/>
</dbReference>
<dbReference type="InterPro" id="IPR027387">
    <property type="entry name" value="Cytb/b6-like_sf"/>
</dbReference>
<dbReference type="InterPro" id="IPR030689">
    <property type="entry name" value="Cytochrome_b"/>
</dbReference>
<dbReference type="InterPro" id="IPR048260">
    <property type="entry name" value="Cytochrome_b_C_euk/bac"/>
</dbReference>
<dbReference type="InterPro" id="IPR048259">
    <property type="entry name" value="Cytochrome_b_N_euk/bac"/>
</dbReference>
<dbReference type="InterPro" id="IPR016174">
    <property type="entry name" value="Di-haem_cyt_TM"/>
</dbReference>
<dbReference type="PANTHER" id="PTHR19271">
    <property type="entry name" value="CYTOCHROME B"/>
    <property type="match status" value="1"/>
</dbReference>
<dbReference type="PANTHER" id="PTHR19271:SF16">
    <property type="entry name" value="CYTOCHROME B"/>
    <property type="match status" value="1"/>
</dbReference>
<dbReference type="Pfam" id="PF00032">
    <property type="entry name" value="Cytochrom_B_C"/>
    <property type="match status" value="1"/>
</dbReference>
<dbReference type="Pfam" id="PF00033">
    <property type="entry name" value="Cytochrome_B"/>
    <property type="match status" value="1"/>
</dbReference>
<dbReference type="PIRSF" id="PIRSF038885">
    <property type="entry name" value="COB"/>
    <property type="match status" value="1"/>
</dbReference>
<dbReference type="SUPFAM" id="SSF81648">
    <property type="entry name" value="a domain/subunit of cytochrome bc1 complex (Ubiquinol-cytochrome c reductase)"/>
    <property type="match status" value="1"/>
</dbReference>
<dbReference type="SUPFAM" id="SSF81342">
    <property type="entry name" value="Transmembrane di-heme cytochromes"/>
    <property type="match status" value="1"/>
</dbReference>
<dbReference type="PROSITE" id="PS51003">
    <property type="entry name" value="CYTB_CTER"/>
    <property type="match status" value="1"/>
</dbReference>
<dbReference type="PROSITE" id="PS51002">
    <property type="entry name" value="CYTB_NTER"/>
    <property type="match status" value="1"/>
</dbReference>
<organism>
    <name type="scientific">Rousettus amplexicaudatus</name>
    <name type="common">Common rousette</name>
    <name type="synonym">Pteropus amplexicaudatus</name>
    <dbReference type="NCBI Taxonomy" id="58083"/>
    <lineage>
        <taxon>Eukaryota</taxon>
        <taxon>Metazoa</taxon>
        <taxon>Chordata</taxon>
        <taxon>Craniata</taxon>
        <taxon>Vertebrata</taxon>
        <taxon>Euteleostomi</taxon>
        <taxon>Mammalia</taxon>
        <taxon>Eutheria</taxon>
        <taxon>Laurasiatheria</taxon>
        <taxon>Chiroptera</taxon>
        <taxon>Yinpterochiroptera</taxon>
        <taxon>Pteropodoidea</taxon>
        <taxon>Pteropodidae</taxon>
        <taxon>Rousettinae</taxon>
        <taxon>Rousettus</taxon>
    </lineage>
</organism>
<evidence type="ECO:0000250" key="1"/>
<evidence type="ECO:0000250" key="2">
    <source>
        <dbReference type="UniProtKB" id="P00157"/>
    </source>
</evidence>
<evidence type="ECO:0000255" key="3">
    <source>
        <dbReference type="PROSITE-ProRule" id="PRU00967"/>
    </source>
</evidence>
<evidence type="ECO:0000255" key="4">
    <source>
        <dbReference type="PROSITE-ProRule" id="PRU00968"/>
    </source>
</evidence>
<accession>Q94NF7</accession>
<accession>Q94YL2</accession>
<keyword id="KW-0249">Electron transport</keyword>
<keyword id="KW-0349">Heme</keyword>
<keyword id="KW-0408">Iron</keyword>
<keyword id="KW-0472">Membrane</keyword>
<keyword id="KW-0479">Metal-binding</keyword>
<keyword id="KW-0496">Mitochondrion</keyword>
<keyword id="KW-0999">Mitochondrion inner membrane</keyword>
<keyword id="KW-0679">Respiratory chain</keyword>
<keyword id="KW-0812">Transmembrane</keyword>
<keyword id="KW-1133">Transmembrane helix</keyword>
<keyword id="KW-0813">Transport</keyword>
<keyword id="KW-0830">Ubiquinone</keyword>
<protein>
    <recommendedName>
        <fullName>Cytochrome b</fullName>
    </recommendedName>
    <alternativeName>
        <fullName>Complex III subunit 3</fullName>
    </alternativeName>
    <alternativeName>
        <fullName>Complex III subunit III</fullName>
    </alternativeName>
    <alternativeName>
        <fullName>Cytochrome b-c1 complex subunit 3</fullName>
    </alternativeName>
    <alternativeName>
        <fullName>Ubiquinol-cytochrome-c reductase complex cytochrome b subunit</fullName>
    </alternativeName>
</protein>
<name>CYB_ROUAM</name>
<feature type="chain" id="PRO_0000061508" description="Cytochrome b">
    <location>
        <begin position="1"/>
        <end position="379"/>
    </location>
</feature>
<feature type="transmembrane region" description="Helical" evidence="2">
    <location>
        <begin position="33"/>
        <end position="53"/>
    </location>
</feature>
<feature type="transmembrane region" description="Helical" evidence="2">
    <location>
        <begin position="77"/>
        <end position="98"/>
    </location>
</feature>
<feature type="transmembrane region" description="Helical" evidence="2">
    <location>
        <begin position="113"/>
        <end position="133"/>
    </location>
</feature>
<feature type="transmembrane region" description="Helical" evidence="2">
    <location>
        <begin position="178"/>
        <end position="198"/>
    </location>
</feature>
<feature type="transmembrane region" description="Helical" evidence="2">
    <location>
        <begin position="226"/>
        <end position="246"/>
    </location>
</feature>
<feature type="transmembrane region" description="Helical" evidence="2">
    <location>
        <begin position="288"/>
        <end position="308"/>
    </location>
</feature>
<feature type="transmembrane region" description="Helical" evidence="2">
    <location>
        <begin position="320"/>
        <end position="340"/>
    </location>
</feature>
<feature type="transmembrane region" description="Helical" evidence="2">
    <location>
        <begin position="347"/>
        <end position="367"/>
    </location>
</feature>
<feature type="binding site" description="axial binding residue" evidence="2">
    <location>
        <position position="83"/>
    </location>
    <ligand>
        <name>heme b</name>
        <dbReference type="ChEBI" id="CHEBI:60344"/>
        <label>b562</label>
    </ligand>
    <ligandPart>
        <name>Fe</name>
        <dbReference type="ChEBI" id="CHEBI:18248"/>
    </ligandPart>
</feature>
<feature type="binding site" description="axial binding residue" evidence="2">
    <location>
        <position position="97"/>
    </location>
    <ligand>
        <name>heme b</name>
        <dbReference type="ChEBI" id="CHEBI:60344"/>
        <label>b566</label>
    </ligand>
    <ligandPart>
        <name>Fe</name>
        <dbReference type="ChEBI" id="CHEBI:18248"/>
    </ligandPart>
</feature>
<feature type="binding site" description="axial binding residue" evidence="2">
    <location>
        <position position="182"/>
    </location>
    <ligand>
        <name>heme b</name>
        <dbReference type="ChEBI" id="CHEBI:60344"/>
        <label>b562</label>
    </ligand>
    <ligandPart>
        <name>Fe</name>
        <dbReference type="ChEBI" id="CHEBI:18248"/>
    </ligandPart>
</feature>
<feature type="binding site" description="axial binding residue" evidence="2">
    <location>
        <position position="196"/>
    </location>
    <ligand>
        <name>heme b</name>
        <dbReference type="ChEBI" id="CHEBI:60344"/>
        <label>b566</label>
    </ligand>
    <ligandPart>
        <name>Fe</name>
        <dbReference type="ChEBI" id="CHEBI:18248"/>
    </ligandPart>
</feature>
<feature type="binding site" evidence="2">
    <location>
        <position position="201"/>
    </location>
    <ligand>
        <name>a ubiquinone</name>
        <dbReference type="ChEBI" id="CHEBI:16389"/>
    </ligand>
</feature>
<feature type="sequence variant">
    <original>I</original>
    <variation>V</variation>
    <location>
        <position position="257"/>
    </location>
</feature>
<feature type="sequence variant">
    <original>L</original>
    <variation>V</variation>
    <location>
        <position position="292"/>
    </location>
</feature>
<reference key="1">
    <citation type="journal article" date="2001" name="Can. J. Zool.">
        <title>Phylogenetic relationships among megachiropteran species from the two major islands of the Philippines, deduced from DNA sequences of the cytochrome b gene.</title>
        <authorList>
            <person name="Bastian S.T. Jr."/>
            <person name="Tanaka K."/>
            <person name="Anunciado R.V.P."/>
            <person name="Natural N.G."/>
            <person name="Sumalde A.C."/>
            <person name="Namikawa T."/>
        </authorList>
    </citation>
    <scope>NUCLEOTIDE SEQUENCE [GENOMIC DNA]</scope>
</reference>
<sequence>MTNIRKTHPLFKIINDSLVDLPTPSSISSWWNFGSLLGICLGIQILTGLFLAMHYTSDTATAFQSVTHICRDVNYGWVLRYLHANGASMFFICLFLHVGRGLYYGSYIFTETWNVGILLLFAVMATAFMGYVLPWGQMSFWGATVITNLLSAIPYIGTNLVEWIWGGFSVDKATLTRFFAFHFLLPFIIAALVIVHLLFLHETGSNNPTGIPSDMDMIPFHPYHTIKDALGMLAMILVLLMLVLFSPDLLGDPDNYIPANPLNTPPHIKPEWYFLFAYAILRSIPNKLGGVLALVLSILILALMPLLHTSKQRSMMFRPLSQCLFWLLVADLLTLTWIGGQPVEHPFIIIGQLASILYFSLILILMPLISIMENYLLKW</sequence>
<proteinExistence type="inferred from homology"/>
<comment type="function">
    <text evidence="2">Component of the ubiquinol-cytochrome c reductase complex (complex III or cytochrome b-c1 complex) that is part of the mitochondrial respiratory chain. The b-c1 complex mediates electron transfer from ubiquinol to cytochrome c. Contributes to the generation of a proton gradient across the mitochondrial membrane that is then used for ATP synthesis.</text>
</comment>
<comment type="cofactor">
    <cofactor evidence="2">
        <name>heme b</name>
        <dbReference type="ChEBI" id="CHEBI:60344"/>
    </cofactor>
    <text evidence="2">Binds 2 heme b groups non-covalently.</text>
</comment>
<comment type="subunit">
    <text evidence="2">The cytochrome bc1 complex contains 11 subunits: 3 respiratory subunits (MT-CYB, CYC1 and UQCRFS1), 2 core proteins (UQCRC1 and UQCRC2) and 6 low-molecular weight proteins (UQCRH/QCR6, UQCRB/QCR7, UQCRQ/QCR8, UQCR10/QCR9, UQCR11/QCR10 and a cleavage product of UQCRFS1). This cytochrome bc1 complex then forms a dimer.</text>
</comment>
<comment type="subcellular location">
    <subcellularLocation>
        <location evidence="2">Mitochondrion inner membrane</location>
        <topology evidence="2">Multi-pass membrane protein</topology>
    </subcellularLocation>
</comment>
<comment type="miscellaneous">
    <text evidence="1">Heme 1 (or BL or b562) is low-potential and absorbs at about 562 nm, and heme 2 (or BH or b566) is high-potential and absorbs at about 566 nm.</text>
</comment>
<comment type="similarity">
    <text evidence="3 4">Belongs to the cytochrome b family.</text>
</comment>
<comment type="caution">
    <text evidence="2">The full-length protein contains only eight transmembrane helices, not nine as predicted by bioinformatics tools.</text>
</comment>
<geneLocation type="mitochondrion"/>